<name>KDSB_BARQU</name>
<organism>
    <name type="scientific">Bartonella quintana (strain Toulouse)</name>
    <name type="common">Rochalimaea quintana</name>
    <dbReference type="NCBI Taxonomy" id="283165"/>
    <lineage>
        <taxon>Bacteria</taxon>
        <taxon>Pseudomonadati</taxon>
        <taxon>Pseudomonadota</taxon>
        <taxon>Alphaproteobacteria</taxon>
        <taxon>Hyphomicrobiales</taxon>
        <taxon>Bartonellaceae</taxon>
        <taxon>Bartonella</taxon>
    </lineage>
</organism>
<comment type="function">
    <text evidence="1">Activates KDO (a required 8-carbon sugar) for incorporation into bacterial lipopolysaccharide in Gram-negative bacteria.</text>
</comment>
<comment type="catalytic activity">
    <reaction evidence="1">
        <text>3-deoxy-alpha-D-manno-oct-2-ulosonate + CTP = CMP-3-deoxy-beta-D-manno-octulosonate + diphosphate</text>
        <dbReference type="Rhea" id="RHEA:23448"/>
        <dbReference type="ChEBI" id="CHEBI:33019"/>
        <dbReference type="ChEBI" id="CHEBI:37563"/>
        <dbReference type="ChEBI" id="CHEBI:85986"/>
        <dbReference type="ChEBI" id="CHEBI:85987"/>
        <dbReference type="EC" id="2.7.7.38"/>
    </reaction>
</comment>
<comment type="pathway">
    <text evidence="1">Nucleotide-sugar biosynthesis; CMP-3-deoxy-D-manno-octulosonate biosynthesis; CMP-3-deoxy-D-manno-octulosonate from 3-deoxy-D-manno-octulosonate and CTP: step 1/1.</text>
</comment>
<comment type="pathway">
    <text evidence="1">Bacterial outer membrane biogenesis; lipopolysaccharide biosynthesis.</text>
</comment>
<comment type="subcellular location">
    <subcellularLocation>
        <location evidence="1">Cytoplasm</location>
    </subcellularLocation>
</comment>
<comment type="similarity">
    <text evidence="1">Belongs to the KdsB family.</text>
</comment>
<accession>Q6G0M4</accession>
<sequence length="243" mass="27145">MALKPIIVIPARIGSTRLPQKALAEIAGKPMIVHVAEQAKKAAFGRTIVATDHHDIAKAVIAYGHECIMTSSHHESGSDRIYEALNHIDPERCYNTILNVQGDLPTITPHEIISALRPLKNSLTDIATLGAKIVEKDEKTDPNVVKIIGTPLSQNRLRALYFTRATAPYGDGPLYHHIGIYAYRREALEKFVALKPSTLEQREKLEQLRALEHNMRIDVEIIDTIPLGVDTQYDLERVRKILA</sequence>
<protein>
    <recommendedName>
        <fullName evidence="1">3-deoxy-manno-octulosonate cytidylyltransferase</fullName>
        <ecNumber evidence="1">2.7.7.38</ecNumber>
    </recommendedName>
    <alternativeName>
        <fullName evidence="1">CMP-2-keto-3-deoxyoctulosonic acid synthase</fullName>
        <shortName evidence="1">CKS</shortName>
        <shortName evidence="1">CMP-KDO synthase</shortName>
    </alternativeName>
</protein>
<reference key="1">
    <citation type="journal article" date="2004" name="Proc. Natl. Acad. Sci. U.S.A.">
        <title>The louse-borne human pathogen Bartonella quintana is a genomic derivative of the zoonotic agent Bartonella henselae.</title>
        <authorList>
            <person name="Alsmark U.C.M."/>
            <person name="Frank A.C."/>
            <person name="Karlberg E.O."/>
            <person name="Legault B.-A."/>
            <person name="Ardell D.H."/>
            <person name="Canbaeck B."/>
            <person name="Eriksson A.-S."/>
            <person name="Naeslund A.K."/>
            <person name="Handley S.A."/>
            <person name="Huvet M."/>
            <person name="La Scola B."/>
            <person name="Holmberg M."/>
            <person name="Andersson S.G.E."/>
        </authorList>
    </citation>
    <scope>NUCLEOTIDE SEQUENCE [LARGE SCALE GENOMIC DNA]</scope>
    <source>
        <strain>Toulouse</strain>
    </source>
</reference>
<feature type="chain" id="PRO_0000370002" description="3-deoxy-manno-octulosonate cytidylyltransferase">
    <location>
        <begin position="1"/>
        <end position="243"/>
    </location>
</feature>
<evidence type="ECO:0000255" key="1">
    <source>
        <dbReference type="HAMAP-Rule" id="MF_00057"/>
    </source>
</evidence>
<keyword id="KW-0963">Cytoplasm</keyword>
<keyword id="KW-0448">Lipopolysaccharide biosynthesis</keyword>
<keyword id="KW-0548">Nucleotidyltransferase</keyword>
<keyword id="KW-0808">Transferase</keyword>
<proteinExistence type="inferred from homology"/>
<gene>
    <name evidence="1" type="primary">kdsB</name>
    <name type="ordered locus">BQ02230</name>
</gene>
<dbReference type="EC" id="2.7.7.38" evidence="1"/>
<dbReference type="EMBL" id="BX897700">
    <property type="protein sequence ID" value="CAF25726.1"/>
    <property type="molecule type" value="Genomic_DNA"/>
</dbReference>
<dbReference type="RefSeq" id="WP_011179039.1">
    <property type="nucleotide sequence ID" value="NC_005955.1"/>
</dbReference>
<dbReference type="SMR" id="Q6G0M4"/>
<dbReference type="KEGG" id="bqu:BQ02230"/>
<dbReference type="eggNOG" id="COG1212">
    <property type="taxonomic scope" value="Bacteria"/>
</dbReference>
<dbReference type="HOGENOM" id="CLU_065038_0_1_5"/>
<dbReference type="OrthoDB" id="9815559at2"/>
<dbReference type="UniPathway" id="UPA00030"/>
<dbReference type="UniPathway" id="UPA00358">
    <property type="reaction ID" value="UER00476"/>
</dbReference>
<dbReference type="Proteomes" id="UP000000597">
    <property type="component" value="Chromosome"/>
</dbReference>
<dbReference type="GO" id="GO:0005829">
    <property type="term" value="C:cytosol"/>
    <property type="evidence" value="ECO:0007669"/>
    <property type="project" value="TreeGrafter"/>
</dbReference>
<dbReference type="GO" id="GO:0008690">
    <property type="term" value="F:3-deoxy-manno-octulosonate cytidylyltransferase activity"/>
    <property type="evidence" value="ECO:0007669"/>
    <property type="project" value="UniProtKB-UniRule"/>
</dbReference>
<dbReference type="GO" id="GO:0033468">
    <property type="term" value="P:CMP-keto-3-deoxy-D-manno-octulosonic acid biosynthetic process"/>
    <property type="evidence" value="ECO:0007669"/>
    <property type="project" value="UniProtKB-UniRule"/>
</dbReference>
<dbReference type="GO" id="GO:0009103">
    <property type="term" value="P:lipopolysaccharide biosynthetic process"/>
    <property type="evidence" value="ECO:0007669"/>
    <property type="project" value="UniProtKB-UniRule"/>
</dbReference>
<dbReference type="CDD" id="cd02517">
    <property type="entry name" value="CMP-KDO-Synthetase"/>
    <property type="match status" value="1"/>
</dbReference>
<dbReference type="Gene3D" id="3.90.550.10">
    <property type="entry name" value="Spore Coat Polysaccharide Biosynthesis Protein SpsA, Chain A"/>
    <property type="match status" value="1"/>
</dbReference>
<dbReference type="HAMAP" id="MF_00057">
    <property type="entry name" value="KdsB"/>
    <property type="match status" value="1"/>
</dbReference>
<dbReference type="InterPro" id="IPR003329">
    <property type="entry name" value="Cytidylyl_trans"/>
</dbReference>
<dbReference type="InterPro" id="IPR004528">
    <property type="entry name" value="KdsB"/>
</dbReference>
<dbReference type="InterPro" id="IPR029044">
    <property type="entry name" value="Nucleotide-diphossugar_trans"/>
</dbReference>
<dbReference type="NCBIfam" id="TIGR00466">
    <property type="entry name" value="kdsB"/>
    <property type="match status" value="1"/>
</dbReference>
<dbReference type="NCBIfam" id="NF003948">
    <property type="entry name" value="PRK05450.1-1"/>
    <property type="match status" value="1"/>
</dbReference>
<dbReference type="NCBIfam" id="NF003952">
    <property type="entry name" value="PRK05450.1-5"/>
    <property type="match status" value="1"/>
</dbReference>
<dbReference type="PANTHER" id="PTHR42866">
    <property type="entry name" value="3-DEOXY-MANNO-OCTULOSONATE CYTIDYLYLTRANSFERASE"/>
    <property type="match status" value="1"/>
</dbReference>
<dbReference type="PANTHER" id="PTHR42866:SF2">
    <property type="entry name" value="3-DEOXY-MANNO-OCTULOSONATE CYTIDYLYLTRANSFERASE, MITOCHONDRIAL"/>
    <property type="match status" value="1"/>
</dbReference>
<dbReference type="Pfam" id="PF02348">
    <property type="entry name" value="CTP_transf_3"/>
    <property type="match status" value="1"/>
</dbReference>
<dbReference type="SUPFAM" id="SSF53448">
    <property type="entry name" value="Nucleotide-diphospho-sugar transferases"/>
    <property type="match status" value="1"/>
</dbReference>